<keyword id="KW-0067">ATP-binding</keyword>
<keyword id="KW-0436">Ligase</keyword>
<keyword id="KW-0460">Magnesium</keyword>
<keyword id="KW-0479">Metal-binding</keyword>
<keyword id="KW-0547">Nucleotide-binding</keyword>
<keyword id="KW-0816">Tricarboxylic acid cycle</keyword>
<protein>
    <recommendedName>
        <fullName evidence="1">Succinate--CoA ligase [ADP-forming] subunit beta</fullName>
        <ecNumber evidence="1">6.2.1.5</ecNumber>
    </recommendedName>
    <alternativeName>
        <fullName evidence="1">Succinyl-CoA synthetase subunit beta</fullName>
        <shortName evidence="1">SCS-beta</shortName>
    </alternativeName>
</protein>
<gene>
    <name evidence="1" type="primary">sucC</name>
    <name type="ordered locus">AB57_3123</name>
</gene>
<organism>
    <name type="scientific">Acinetobacter baumannii (strain AB0057)</name>
    <dbReference type="NCBI Taxonomy" id="480119"/>
    <lineage>
        <taxon>Bacteria</taxon>
        <taxon>Pseudomonadati</taxon>
        <taxon>Pseudomonadota</taxon>
        <taxon>Gammaproteobacteria</taxon>
        <taxon>Moraxellales</taxon>
        <taxon>Moraxellaceae</taxon>
        <taxon>Acinetobacter</taxon>
        <taxon>Acinetobacter calcoaceticus/baumannii complex</taxon>
    </lineage>
</organism>
<sequence>MNLHEYQAKALLKEYGMPVQEGILATNADEAVAAFEQLGGKFAVMKAQVHAGGRGKAGGVKVAKSKEDVIEFANNIIGTRLVTYQTDANGQPVNSIIVAEDVYPVERELYLGAVVDRSSRRITFMASTEGGVEIEKVAEETPEKIIKVEVDPLVGLQPFQAREVAFALGLKDKQIGQFVKIMTAAYQAFVENDFALFEINPLSVRENGEILCVDAKVGIDSNALYRLPKVAALRDKSQENERELKASEFDLNYVALEGNIGCMVNGAGLAMATMDIIKLYGGQPANFLDVGGGATKERVIEAFKIILADTSVQGVLINIFGGIVRCDMIAEAIIAAVQEVNVTVPVVVRLEGNNAELGAKLLDESGLKLISANGLSDAAEKVVAAVKA</sequence>
<proteinExistence type="inferred from homology"/>
<name>SUCC_ACIB5</name>
<comment type="function">
    <text evidence="1">Succinyl-CoA synthetase functions in the citric acid cycle (TCA), coupling the hydrolysis of succinyl-CoA to the synthesis of either ATP or GTP and thus represents the only step of substrate-level phosphorylation in the TCA. The beta subunit provides nucleotide specificity of the enzyme and binds the substrate succinate, while the binding sites for coenzyme A and phosphate are found in the alpha subunit.</text>
</comment>
<comment type="catalytic activity">
    <reaction evidence="1">
        <text>succinate + ATP + CoA = succinyl-CoA + ADP + phosphate</text>
        <dbReference type="Rhea" id="RHEA:17661"/>
        <dbReference type="ChEBI" id="CHEBI:30031"/>
        <dbReference type="ChEBI" id="CHEBI:30616"/>
        <dbReference type="ChEBI" id="CHEBI:43474"/>
        <dbReference type="ChEBI" id="CHEBI:57287"/>
        <dbReference type="ChEBI" id="CHEBI:57292"/>
        <dbReference type="ChEBI" id="CHEBI:456216"/>
        <dbReference type="EC" id="6.2.1.5"/>
    </reaction>
    <physiologicalReaction direction="right-to-left" evidence="1">
        <dbReference type="Rhea" id="RHEA:17663"/>
    </physiologicalReaction>
</comment>
<comment type="catalytic activity">
    <reaction evidence="1">
        <text>GTP + succinate + CoA = succinyl-CoA + GDP + phosphate</text>
        <dbReference type="Rhea" id="RHEA:22120"/>
        <dbReference type="ChEBI" id="CHEBI:30031"/>
        <dbReference type="ChEBI" id="CHEBI:37565"/>
        <dbReference type="ChEBI" id="CHEBI:43474"/>
        <dbReference type="ChEBI" id="CHEBI:57287"/>
        <dbReference type="ChEBI" id="CHEBI:57292"/>
        <dbReference type="ChEBI" id="CHEBI:58189"/>
    </reaction>
    <physiologicalReaction direction="right-to-left" evidence="1">
        <dbReference type="Rhea" id="RHEA:22122"/>
    </physiologicalReaction>
</comment>
<comment type="cofactor">
    <cofactor evidence="1">
        <name>Mg(2+)</name>
        <dbReference type="ChEBI" id="CHEBI:18420"/>
    </cofactor>
    <text evidence="1">Binds 1 Mg(2+) ion per subunit.</text>
</comment>
<comment type="pathway">
    <text evidence="1">Carbohydrate metabolism; tricarboxylic acid cycle; succinate from succinyl-CoA (ligase route): step 1/1.</text>
</comment>
<comment type="subunit">
    <text evidence="1">Heterotetramer of two alpha and two beta subunits.</text>
</comment>
<comment type="similarity">
    <text evidence="1">Belongs to the succinate/malate CoA ligase beta subunit family.</text>
</comment>
<reference key="1">
    <citation type="journal article" date="2008" name="J. Bacteriol.">
        <title>Comparative genome sequence analysis of multidrug-resistant Acinetobacter baumannii.</title>
        <authorList>
            <person name="Adams M.D."/>
            <person name="Goglin K."/>
            <person name="Molyneaux N."/>
            <person name="Hujer K.M."/>
            <person name="Lavender H."/>
            <person name="Jamison J.J."/>
            <person name="MacDonald I.J."/>
            <person name="Martin K.M."/>
            <person name="Russo T."/>
            <person name="Campagnari A.A."/>
            <person name="Hujer A.M."/>
            <person name="Bonomo R.A."/>
            <person name="Gill S.R."/>
        </authorList>
    </citation>
    <scope>NUCLEOTIDE SEQUENCE [LARGE SCALE GENOMIC DNA]</scope>
    <source>
        <strain>AB0057</strain>
    </source>
</reference>
<feature type="chain" id="PRO_1000129146" description="Succinate--CoA ligase [ADP-forming] subunit beta">
    <location>
        <begin position="1"/>
        <end position="388"/>
    </location>
</feature>
<feature type="domain" description="ATP-grasp" evidence="1">
    <location>
        <begin position="9"/>
        <end position="245"/>
    </location>
</feature>
<feature type="binding site" evidence="1">
    <location>
        <position position="46"/>
    </location>
    <ligand>
        <name>ATP</name>
        <dbReference type="ChEBI" id="CHEBI:30616"/>
    </ligand>
</feature>
<feature type="binding site" evidence="1">
    <location>
        <begin position="53"/>
        <end position="55"/>
    </location>
    <ligand>
        <name>ATP</name>
        <dbReference type="ChEBI" id="CHEBI:30616"/>
    </ligand>
</feature>
<feature type="binding site" evidence="1">
    <location>
        <position position="100"/>
    </location>
    <ligand>
        <name>ATP</name>
        <dbReference type="ChEBI" id="CHEBI:30616"/>
    </ligand>
</feature>
<feature type="binding site" evidence="1">
    <location>
        <position position="103"/>
    </location>
    <ligand>
        <name>ATP</name>
        <dbReference type="ChEBI" id="CHEBI:30616"/>
    </ligand>
</feature>
<feature type="binding site" evidence="1">
    <location>
        <position position="108"/>
    </location>
    <ligand>
        <name>ATP</name>
        <dbReference type="ChEBI" id="CHEBI:30616"/>
    </ligand>
</feature>
<feature type="binding site" evidence="1">
    <location>
        <position position="200"/>
    </location>
    <ligand>
        <name>Mg(2+)</name>
        <dbReference type="ChEBI" id="CHEBI:18420"/>
    </ligand>
</feature>
<feature type="binding site" evidence="1">
    <location>
        <position position="214"/>
    </location>
    <ligand>
        <name>Mg(2+)</name>
        <dbReference type="ChEBI" id="CHEBI:18420"/>
    </ligand>
</feature>
<feature type="binding site" evidence="1">
    <location>
        <position position="265"/>
    </location>
    <ligand>
        <name>substrate</name>
        <note>ligand shared with subunit alpha</note>
    </ligand>
</feature>
<feature type="binding site" evidence="1">
    <location>
        <begin position="322"/>
        <end position="324"/>
    </location>
    <ligand>
        <name>substrate</name>
        <note>ligand shared with subunit alpha</note>
    </ligand>
</feature>
<dbReference type="EC" id="6.2.1.5" evidence="1"/>
<dbReference type="EMBL" id="CP001182">
    <property type="protein sequence ID" value="ACJ41708.1"/>
    <property type="molecule type" value="Genomic_DNA"/>
</dbReference>
<dbReference type="RefSeq" id="WP_001048573.1">
    <property type="nucleotide sequence ID" value="NC_011586.2"/>
</dbReference>
<dbReference type="SMR" id="B7I6T2"/>
<dbReference type="GeneID" id="92894978"/>
<dbReference type="KEGG" id="abn:AB57_3123"/>
<dbReference type="HOGENOM" id="CLU_037430_0_2_6"/>
<dbReference type="UniPathway" id="UPA00223">
    <property type="reaction ID" value="UER00999"/>
</dbReference>
<dbReference type="Proteomes" id="UP000007094">
    <property type="component" value="Chromosome"/>
</dbReference>
<dbReference type="GO" id="GO:0005829">
    <property type="term" value="C:cytosol"/>
    <property type="evidence" value="ECO:0007669"/>
    <property type="project" value="TreeGrafter"/>
</dbReference>
<dbReference type="GO" id="GO:0042709">
    <property type="term" value="C:succinate-CoA ligase complex"/>
    <property type="evidence" value="ECO:0007669"/>
    <property type="project" value="TreeGrafter"/>
</dbReference>
<dbReference type="GO" id="GO:0005524">
    <property type="term" value="F:ATP binding"/>
    <property type="evidence" value="ECO:0007669"/>
    <property type="project" value="UniProtKB-UniRule"/>
</dbReference>
<dbReference type="GO" id="GO:0000287">
    <property type="term" value="F:magnesium ion binding"/>
    <property type="evidence" value="ECO:0007669"/>
    <property type="project" value="UniProtKB-UniRule"/>
</dbReference>
<dbReference type="GO" id="GO:0004775">
    <property type="term" value="F:succinate-CoA ligase (ADP-forming) activity"/>
    <property type="evidence" value="ECO:0007669"/>
    <property type="project" value="UniProtKB-UniRule"/>
</dbReference>
<dbReference type="GO" id="GO:0004776">
    <property type="term" value="F:succinate-CoA ligase (GDP-forming) activity"/>
    <property type="evidence" value="ECO:0007669"/>
    <property type="project" value="RHEA"/>
</dbReference>
<dbReference type="GO" id="GO:0006104">
    <property type="term" value="P:succinyl-CoA metabolic process"/>
    <property type="evidence" value="ECO:0007669"/>
    <property type="project" value="TreeGrafter"/>
</dbReference>
<dbReference type="GO" id="GO:0006099">
    <property type="term" value="P:tricarboxylic acid cycle"/>
    <property type="evidence" value="ECO:0007669"/>
    <property type="project" value="UniProtKB-UniRule"/>
</dbReference>
<dbReference type="FunFam" id="3.30.1490.20:FF:000002">
    <property type="entry name" value="Succinate--CoA ligase [ADP-forming] subunit beta"/>
    <property type="match status" value="1"/>
</dbReference>
<dbReference type="FunFam" id="3.30.470.20:FF:000002">
    <property type="entry name" value="Succinate--CoA ligase [ADP-forming] subunit beta"/>
    <property type="match status" value="1"/>
</dbReference>
<dbReference type="FunFam" id="3.40.50.261:FF:000001">
    <property type="entry name" value="Succinate--CoA ligase [ADP-forming] subunit beta"/>
    <property type="match status" value="1"/>
</dbReference>
<dbReference type="Gene3D" id="3.30.1490.20">
    <property type="entry name" value="ATP-grasp fold, A domain"/>
    <property type="match status" value="1"/>
</dbReference>
<dbReference type="Gene3D" id="3.30.470.20">
    <property type="entry name" value="ATP-grasp fold, B domain"/>
    <property type="match status" value="1"/>
</dbReference>
<dbReference type="Gene3D" id="3.40.50.261">
    <property type="entry name" value="Succinyl-CoA synthetase domains"/>
    <property type="match status" value="1"/>
</dbReference>
<dbReference type="HAMAP" id="MF_00558">
    <property type="entry name" value="Succ_CoA_beta"/>
    <property type="match status" value="1"/>
</dbReference>
<dbReference type="InterPro" id="IPR011761">
    <property type="entry name" value="ATP-grasp"/>
</dbReference>
<dbReference type="InterPro" id="IPR013650">
    <property type="entry name" value="ATP-grasp_succ-CoA_synth-type"/>
</dbReference>
<dbReference type="InterPro" id="IPR013815">
    <property type="entry name" value="ATP_grasp_subdomain_1"/>
</dbReference>
<dbReference type="InterPro" id="IPR017866">
    <property type="entry name" value="Succ-CoA_synthase_bsu_CS"/>
</dbReference>
<dbReference type="InterPro" id="IPR005811">
    <property type="entry name" value="SUCC_ACL_C"/>
</dbReference>
<dbReference type="InterPro" id="IPR005809">
    <property type="entry name" value="Succ_CoA_ligase-like_bsu"/>
</dbReference>
<dbReference type="InterPro" id="IPR016102">
    <property type="entry name" value="Succinyl-CoA_synth-like"/>
</dbReference>
<dbReference type="NCBIfam" id="NF001913">
    <property type="entry name" value="PRK00696.1"/>
    <property type="match status" value="1"/>
</dbReference>
<dbReference type="NCBIfam" id="TIGR01016">
    <property type="entry name" value="sucCoAbeta"/>
    <property type="match status" value="1"/>
</dbReference>
<dbReference type="PANTHER" id="PTHR11815:SF10">
    <property type="entry name" value="SUCCINATE--COA LIGASE [GDP-FORMING] SUBUNIT BETA, MITOCHONDRIAL"/>
    <property type="match status" value="1"/>
</dbReference>
<dbReference type="PANTHER" id="PTHR11815">
    <property type="entry name" value="SUCCINYL-COA SYNTHETASE BETA CHAIN"/>
    <property type="match status" value="1"/>
</dbReference>
<dbReference type="Pfam" id="PF08442">
    <property type="entry name" value="ATP-grasp_2"/>
    <property type="match status" value="1"/>
</dbReference>
<dbReference type="Pfam" id="PF00549">
    <property type="entry name" value="Ligase_CoA"/>
    <property type="match status" value="1"/>
</dbReference>
<dbReference type="PIRSF" id="PIRSF001554">
    <property type="entry name" value="SucCS_beta"/>
    <property type="match status" value="1"/>
</dbReference>
<dbReference type="SUPFAM" id="SSF56059">
    <property type="entry name" value="Glutathione synthetase ATP-binding domain-like"/>
    <property type="match status" value="1"/>
</dbReference>
<dbReference type="SUPFAM" id="SSF52210">
    <property type="entry name" value="Succinyl-CoA synthetase domains"/>
    <property type="match status" value="1"/>
</dbReference>
<dbReference type="PROSITE" id="PS50975">
    <property type="entry name" value="ATP_GRASP"/>
    <property type="match status" value="1"/>
</dbReference>
<dbReference type="PROSITE" id="PS01217">
    <property type="entry name" value="SUCCINYL_COA_LIG_3"/>
    <property type="match status" value="1"/>
</dbReference>
<accession>B7I6T2</accession>
<evidence type="ECO:0000255" key="1">
    <source>
        <dbReference type="HAMAP-Rule" id="MF_00558"/>
    </source>
</evidence>